<gene>
    <name type="primary">DOLPP1</name>
    <name type="synonym">LSFR2</name>
</gene>
<keyword id="KW-0025">Alternative splicing</keyword>
<keyword id="KW-0256">Endoplasmic reticulum</keyword>
<keyword id="KW-0378">Hydrolase</keyword>
<keyword id="KW-0472">Membrane</keyword>
<keyword id="KW-1267">Proteomics identification</keyword>
<keyword id="KW-1185">Reference proteome</keyword>
<keyword id="KW-0812">Transmembrane</keyword>
<keyword id="KW-1133">Transmembrane helix</keyword>
<sequence>MAADGQCSLPASWRPVTLTHVEYPAGDLSGHLLAYLSLSPVFVIVGFVTLIIFKRELHTISFLGGLALNEGVNWLIKNVIQEPRPCGGPHTAVGTKYGMPSSHSQFMWFFSVYSFLFLYLRMHQTNNARFLDLLWRHVLSLGLLAVAFLVSYSRVYLLYHTWSQVLYGGIAGGLMAIAWFIFTQEVLTPLFPRIAAWPVSEFFLIRDTSLIPNVLWFEYTVTRAEARNRQRKLGTKLQ</sequence>
<reference evidence="7" key="1">
    <citation type="submission" date="2002-11" db="EMBL/GenBank/DDBJ databases">
        <title>Dolichyl pyrophosphate phosphatase (human CWH8).</title>
        <authorList>
            <person name="Denecke J."/>
            <person name="Marquardt T."/>
            <person name="Kranz C."/>
        </authorList>
    </citation>
    <scope>NUCLEOTIDE SEQUENCE [MRNA] (ISOFORM 1)</scope>
</reference>
<reference key="2">
    <citation type="journal article" date="2004" name="Nat. Genet.">
        <title>Complete sequencing and characterization of 21,243 full-length human cDNAs.</title>
        <authorList>
            <person name="Ota T."/>
            <person name="Suzuki Y."/>
            <person name="Nishikawa T."/>
            <person name="Otsuki T."/>
            <person name="Sugiyama T."/>
            <person name="Irie R."/>
            <person name="Wakamatsu A."/>
            <person name="Hayashi K."/>
            <person name="Sato H."/>
            <person name="Nagai K."/>
            <person name="Kimura K."/>
            <person name="Makita H."/>
            <person name="Sekine M."/>
            <person name="Obayashi M."/>
            <person name="Nishi T."/>
            <person name="Shibahara T."/>
            <person name="Tanaka T."/>
            <person name="Ishii S."/>
            <person name="Yamamoto J."/>
            <person name="Saito K."/>
            <person name="Kawai Y."/>
            <person name="Isono Y."/>
            <person name="Nakamura Y."/>
            <person name="Nagahari K."/>
            <person name="Murakami K."/>
            <person name="Yasuda T."/>
            <person name="Iwayanagi T."/>
            <person name="Wagatsuma M."/>
            <person name="Shiratori A."/>
            <person name="Sudo H."/>
            <person name="Hosoiri T."/>
            <person name="Kaku Y."/>
            <person name="Kodaira H."/>
            <person name="Kondo H."/>
            <person name="Sugawara M."/>
            <person name="Takahashi M."/>
            <person name="Kanda K."/>
            <person name="Yokoi T."/>
            <person name="Furuya T."/>
            <person name="Kikkawa E."/>
            <person name="Omura Y."/>
            <person name="Abe K."/>
            <person name="Kamihara K."/>
            <person name="Katsuta N."/>
            <person name="Sato K."/>
            <person name="Tanikawa M."/>
            <person name="Yamazaki M."/>
            <person name="Ninomiya K."/>
            <person name="Ishibashi T."/>
            <person name="Yamashita H."/>
            <person name="Murakawa K."/>
            <person name="Fujimori K."/>
            <person name="Tanai H."/>
            <person name="Kimata M."/>
            <person name="Watanabe M."/>
            <person name="Hiraoka S."/>
            <person name="Chiba Y."/>
            <person name="Ishida S."/>
            <person name="Ono Y."/>
            <person name="Takiguchi S."/>
            <person name="Watanabe S."/>
            <person name="Yosida M."/>
            <person name="Hotuta T."/>
            <person name="Kusano J."/>
            <person name="Kanehori K."/>
            <person name="Takahashi-Fujii A."/>
            <person name="Hara H."/>
            <person name="Tanase T.-O."/>
            <person name="Nomura Y."/>
            <person name="Togiya S."/>
            <person name="Komai F."/>
            <person name="Hara R."/>
            <person name="Takeuchi K."/>
            <person name="Arita M."/>
            <person name="Imose N."/>
            <person name="Musashino K."/>
            <person name="Yuuki H."/>
            <person name="Oshima A."/>
            <person name="Sasaki N."/>
            <person name="Aotsuka S."/>
            <person name="Yoshikawa Y."/>
            <person name="Matsunawa H."/>
            <person name="Ichihara T."/>
            <person name="Shiohata N."/>
            <person name="Sano S."/>
            <person name="Moriya S."/>
            <person name="Momiyama H."/>
            <person name="Satoh N."/>
            <person name="Takami S."/>
            <person name="Terashima Y."/>
            <person name="Suzuki O."/>
            <person name="Nakagawa S."/>
            <person name="Senoh A."/>
            <person name="Mizoguchi H."/>
            <person name="Goto Y."/>
            <person name="Shimizu F."/>
            <person name="Wakebe H."/>
            <person name="Hishigaki H."/>
            <person name="Watanabe T."/>
            <person name="Sugiyama A."/>
            <person name="Takemoto M."/>
            <person name="Kawakami B."/>
            <person name="Yamazaki M."/>
            <person name="Watanabe K."/>
            <person name="Kumagai A."/>
            <person name="Itakura S."/>
            <person name="Fukuzumi Y."/>
            <person name="Fujimori Y."/>
            <person name="Komiyama M."/>
            <person name="Tashiro H."/>
            <person name="Tanigami A."/>
            <person name="Fujiwara T."/>
            <person name="Ono T."/>
            <person name="Yamada K."/>
            <person name="Fujii Y."/>
            <person name="Ozaki K."/>
            <person name="Hirao M."/>
            <person name="Ohmori Y."/>
            <person name="Kawabata A."/>
            <person name="Hikiji T."/>
            <person name="Kobatake N."/>
            <person name="Inagaki H."/>
            <person name="Ikema Y."/>
            <person name="Okamoto S."/>
            <person name="Okitani R."/>
            <person name="Kawakami T."/>
            <person name="Noguchi S."/>
            <person name="Itoh T."/>
            <person name="Shigeta K."/>
            <person name="Senba T."/>
            <person name="Matsumura K."/>
            <person name="Nakajima Y."/>
            <person name="Mizuno T."/>
            <person name="Morinaga M."/>
            <person name="Sasaki M."/>
            <person name="Togashi T."/>
            <person name="Oyama M."/>
            <person name="Hata H."/>
            <person name="Watanabe M."/>
            <person name="Komatsu T."/>
            <person name="Mizushima-Sugano J."/>
            <person name="Satoh T."/>
            <person name="Shirai Y."/>
            <person name="Takahashi Y."/>
            <person name="Nakagawa K."/>
            <person name="Okumura K."/>
            <person name="Nagase T."/>
            <person name="Nomura N."/>
            <person name="Kikuchi H."/>
            <person name="Masuho Y."/>
            <person name="Yamashita R."/>
            <person name="Nakai K."/>
            <person name="Yada T."/>
            <person name="Nakamura Y."/>
            <person name="Ohara O."/>
            <person name="Isogai T."/>
            <person name="Sugano S."/>
        </authorList>
    </citation>
    <scope>NUCLEOTIDE SEQUENCE [LARGE SCALE MRNA] (ISOFORMS 1 AND 2)</scope>
    <source>
        <tissue>Cerebellum</tissue>
        <tissue>Lung</tissue>
    </source>
</reference>
<reference key="3">
    <citation type="journal article" date="2004" name="Nature">
        <title>DNA sequence and analysis of human chromosome 9.</title>
        <authorList>
            <person name="Humphray S.J."/>
            <person name="Oliver K."/>
            <person name="Hunt A.R."/>
            <person name="Plumb R.W."/>
            <person name="Loveland J.E."/>
            <person name="Howe K.L."/>
            <person name="Andrews T.D."/>
            <person name="Searle S."/>
            <person name="Hunt S.E."/>
            <person name="Scott C.E."/>
            <person name="Jones M.C."/>
            <person name="Ainscough R."/>
            <person name="Almeida J.P."/>
            <person name="Ambrose K.D."/>
            <person name="Ashwell R.I.S."/>
            <person name="Babbage A.K."/>
            <person name="Babbage S."/>
            <person name="Bagguley C.L."/>
            <person name="Bailey J."/>
            <person name="Banerjee R."/>
            <person name="Barker D.J."/>
            <person name="Barlow K.F."/>
            <person name="Bates K."/>
            <person name="Beasley H."/>
            <person name="Beasley O."/>
            <person name="Bird C.P."/>
            <person name="Bray-Allen S."/>
            <person name="Brown A.J."/>
            <person name="Brown J.Y."/>
            <person name="Burford D."/>
            <person name="Burrill W."/>
            <person name="Burton J."/>
            <person name="Carder C."/>
            <person name="Carter N.P."/>
            <person name="Chapman J.C."/>
            <person name="Chen Y."/>
            <person name="Clarke G."/>
            <person name="Clark S.Y."/>
            <person name="Clee C.M."/>
            <person name="Clegg S."/>
            <person name="Collier R.E."/>
            <person name="Corby N."/>
            <person name="Crosier M."/>
            <person name="Cummings A.T."/>
            <person name="Davies J."/>
            <person name="Dhami P."/>
            <person name="Dunn M."/>
            <person name="Dutta I."/>
            <person name="Dyer L.W."/>
            <person name="Earthrowl M.E."/>
            <person name="Faulkner L."/>
            <person name="Fleming C.J."/>
            <person name="Frankish A."/>
            <person name="Frankland J.A."/>
            <person name="French L."/>
            <person name="Fricker D.G."/>
            <person name="Garner P."/>
            <person name="Garnett J."/>
            <person name="Ghori J."/>
            <person name="Gilbert J.G.R."/>
            <person name="Glison C."/>
            <person name="Grafham D.V."/>
            <person name="Gribble S."/>
            <person name="Griffiths C."/>
            <person name="Griffiths-Jones S."/>
            <person name="Grocock R."/>
            <person name="Guy J."/>
            <person name="Hall R.E."/>
            <person name="Hammond S."/>
            <person name="Harley J.L."/>
            <person name="Harrison E.S.I."/>
            <person name="Hart E.A."/>
            <person name="Heath P.D."/>
            <person name="Henderson C.D."/>
            <person name="Hopkins B.L."/>
            <person name="Howard P.J."/>
            <person name="Howden P.J."/>
            <person name="Huckle E."/>
            <person name="Johnson C."/>
            <person name="Johnson D."/>
            <person name="Joy A.A."/>
            <person name="Kay M."/>
            <person name="Keenan S."/>
            <person name="Kershaw J.K."/>
            <person name="Kimberley A.M."/>
            <person name="King A."/>
            <person name="Knights A."/>
            <person name="Laird G.K."/>
            <person name="Langford C."/>
            <person name="Lawlor S."/>
            <person name="Leongamornlert D.A."/>
            <person name="Leversha M."/>
            <person name="Lloyd C."/>
            <person name="Lloyd D.M."/>
            <person name="Lovell J."/>
            <person name="Martin S."/>
            <person name="Mashreghi-Mohammadi M."/>
            <person name="Matthews L."/>
            <person name="McLaren S."/>
            <person name="McLay K.E."/>
            <person name="McMurray A."/>
            <person name="Milne S."/>
            <person name="Nickerson T."/>
            <person name="Nisbett J."/>
            <person name="Nordsiek G."/>
            <person name="Pearce A.V."/>
            <person name="Peck A.I."/>
            <person name="Porter K.M."/>
            <person name="Pandian R."/>
            <person name="Pelan S."/>
            <person name="Phillimore B."/>
            <person name="Povey S."/>
            <person name="Ramsey Y."/>
            <person name="Rand V."/>
            <person name="Scharfe M."/>
            <person name="Sehra H.K."/>
            <person name="Shownkeen R."/>
            <person name="Sims S.K."/>
            <person name="Skuce C.D."/>
            <person name="Smith M."/>
            <person name="Steward C.A."/>
            <person name="Swarbreck D."/>
            <person name="Sycamore N."/>
            <person name="Tester J."/>
            <person name="Thorpe A."/>
            <person name="Tracey A."/>
            <person name="Tromans A."/>
            <person name="Thomas D.W."/>
            <person name="Wall M."/>
            <person name="Wallis J.M."/>
            <person name="West A.P."/>
            <person name="Whitehead S.L."/>
            <person name="Willey D.L."/>
            <person name="Williams S.A."/>
            <person name="Wilming L."/>
            <person name="Wray P.W."/>
            <person name="Young L."/>
            <person name="Ashurst J.L."/>
            <person name="Coulson A."/>
            <person name="Blocker H."/>
            <person name="Durbin R.M."/>
            <person name="Sulston J.E."/>
            <person name="Hubbard T."/>
            <person name="Jackson M.J."/>
            <person name="Bentley D.R."/>
            <person name="Beck S."/>
            <person name="Rogers J."/>
            <person name="Dunham I."/>
        </authorList>
    </citation>
    <scope>NUCLEOTIDE SEQUENCE [LARGE SCALE GENOMIC DNA]</scope>
</reference>
<reference evidence="7" key="4">
    <citation type="submission" date="2005-07" db="EMBL/GenBank/DDBJ databases">
        <authorList>
            <person name="Mural R.J."/>
            <person name="Istrail S."/>
            <person name="Sutton G.G."/>
            <person name="Florea L."/>
            <person name="Halpern A.L."/>
            <person name="Mobarry C.M."/>
            <person name="Lippert R."/>
            <person name="Walenz B."/>
            <person name="Shatkay H."/>
            <person name="Dew I."/>
            <person name="Miller J.R."/>
            <person name="Flanigan M.J."/>
            <person name="Edwards N.J."/>
            <person name="Bolanos R."/>
            <person name="Fasulo D."/>
            <person name="Halldorsson B.V."/>
            <person name="Hannenhalli S."/>
            <person name="Turner R."/>
            <person name="Yooseph S."/>
            <person name="Lu F."/>
            <person name="Nusskern D.R."/>
            <person name="Shue B.C."/>
            <person name="Zheng X.H."/>
            <person name="Zhong F."/>
            <person name="Delcher A.L."/>
            <person name="Huson D.H."/>
            <person name="Kravitz S.A."/>
            <person name="Mouchard L."/>
            <person name="Reinert K."/>
            <person name="Remington K.A."/>
            <person name="Clark A.G."/>
            <person name="Waterman M.S."/>
            <person name="Eichler E.E."/>
            <person name="Adams M.D."/>
            <person name="Hunkapiller M.W."/>
            <person name="Myers E.W."/>
            <person name="Venter J.C."/>
        </authorList>
    </citation>
    <scope>NUCLEOTIDE SEQUENCE [LARGE SCALE GENOMIC DNA]</scope>
</reference>
<reference evidence="5" key="5">
    <citation type="journal article" date="2004" name="Genome Res.">
        <title>The status, quality, and expansion of the NIH full-length cDNA project: the Mammalian Gene Collection (MGC).</title>
        <authorList>
            <consortium name="The MGC Project Team"/>
        </authorList>
    </citation>
    <scope>NUCLEOTIDE SEQUENCE [LARGE SCALE MRNA] (ISOFORM 1)</scope>
    <source>
        <tissue>Brain</tissue>
        <tissue evidence="6">Lung</tissue>
    </source>
</reference>
<reference key="6">
    <citation type="journal article" date="1999" name="Hum. Mol. Genet.">
        <title>Extensive gene order differences within regions of conserved synteny between the Fugu and human genomes: implications for chromosomal evolution and the cloning of disease genes.</title>
        <authorList>
            <person name="Gilley J."/>
            <person name="Fried M."/>
        </authorList>
    </citation>
    <scope>NUCLEOTIDE SEQUENCE [GENOMIC DNA] OF 198-227</scope>
</reference>
<organism evidence="7">
    <name type="scientific">Homo sapiens</name>
    <name type="common">Human</name>
    <dbReference type="NCBI Taxonomy" id="9606"/>
    <lineage>
        <taxon>Eukaryota</taxon>
        <taxon>Metazoa</taxon>
        <taxon>Chordata</taxon>
        <taxon>Craniata</taxon>
        <taxon>Vertebrata</taxon>
        <taxon>Euteleostomi</taxon>
        <taxon>Mammalia</taxon>
        <taxon>Eutheria</taxon>
        <taxon>Euarchontoglires</taxon>
        <taxon>Primates</taxon>
        <taxon>Haplorrhini</taxon>
        <taxon>Catarrhini</taxon>
        <taxon>Hominidae</taxon>
        <taxon>Homo</taxon>
    </lineage>
</organism>
<proteinExistence type="evidence at protein level"/>
<evidence type="ECO:0000250" key="1"/>
<evidence type="ECO:0000250" key="2">
    <source>
        <dbReference type="UniProtKB" id="Q9JMF7"/>
    </source>
</evidence>
<evidence type="ECO:0000255" key="3"/>
<evidence type="ECO:0000303" key="4">
    <source>
    </source>
</evidence>
<evidence type="ECO:0000305" key="5"/>
<evidence type="ECO:0000312" key="6">
    <source>
        <dbReference type="EMBL" id="AAH09493.2"/>
    </source>
</evidence>
<evidence type="ECO:0000312" key="7">
    <source>
        <dbReference type="EMBL" id="AAO34712.1"/>
    </source>
</evidence>
<feature type="chain" id="PRO_0000215626" description="Dolichyldiphosphatase 1">
    <location>
        <begin position="1"/>
        <end position="238"/>
    </location>
</feature>
<feature type="transmembrane region" description="Helical" evidence="3">
    <location>
        <begin position="33"/>
        <end position="53"/>
    </location>
</feature>
<feature type="transmembrane region" description="Helical" evidence="3">
    <location>
        <begin position="100"/>
        <end position="120"/>
    </location>
</feature>
<feature type="transmembrane region" description="Helical" evidence="3">
    <location>
        <begin position="130"/>
        <end position="150"/>
    </location>
</feature>
<feature type="transmembrane region" description="Helical" evidence="3">
    <location>
        <begin position="162"/>
        <end position="182"/>
    </location>
</feature>
<feature type="splice variant" id="VSP_042210" description="In isoform 2." evidence="4">
    <location>
        <begin position="155"/>
        <end position="197"/>
    </location>
</feature>
<protein>
    <recommendedName>
        <fullName>Dolichyldiphosphatase 1</fullName>
        <ecNumber>3.6.1.43</ecNumber>
    </recommendedName>
    <alternativeName>
        <fullName>Dolichyl pyrophosphate phosphatase 1</fullName>
    </alternativeName>
</protein>
<comment type="function">
    <text evidence="2">Required for efficient N-glycosylation. Necessary for maintaining optimal levels of dolichol-linked oligosaccharides. Hydrolyzes dolichyl pyrophosphate at a very high rate and dolichyl monophosphate at a much lower rate. Does not act on phosphatidate (By similarity).</text>
</comment>
<comment type="catalytic activity">
    <reaction evidence="2">
        <text>a di-trans,poly-cis-dolichyl diphosphate + H2O = a di-trans,poly-cis-dolichyl phosphate + phosphate + H(+)</text>
        <dbReference type="Rhea" id="RHEA:14385"/>
        <dbReference type="Rhea" id="RHEA-COMP:19498"/>
        <dbReference type="Rhea" id="RHEA-COMP:19506"/>
        <dbReference type="ChEBI" id="CHEBI:15377"/>
        <dbReference type="ChEBI" id="CHEBI:15378"/>
        <dbReference type="ChEBI" id="CHEBI:43474"/>
        <dbReference type="ChEBI" id="CHEBI:57497"/>
        <dbReference type="ChEBI" id="CHEBI:57683"/>
        <dbReference type="EC" id="3.6.1.43"/>
    </reaction>
</comment>
<comment type="pathway">
    <text>Protein modification; protein glycosylation.</text>
</comment>
<comment type="subcellular location">
    <subcellularLocation>
        <location evidence="1">Endoplasmic reticulum membrane</location>
        <topology evidence="1">Multi-pass membrane protein</topology>
    </subcellularLocation>
</comment>
<comment type="alternative products">
    <event type="alternative splicing"/>
    <isoform>
        <id>Q86YN1-1</id>
        <name>1</name>
        <sequence type="displayed"/>
    </isoform>
    <isoform>
        <id>Q86YN1-2</id>
        <name>2</name>
        <sequence type="described" ref="VSP_042210"/>
    </isoform>
</comment>
<comment type="similarity">
    <text evidence="5">Belongs to the dolichyldiphosphatase family.</text>
</comment>
<comment type="sequence caution" evidence="5">
    <conflict type="erroneous gene model prediction">
        <sequence resource="EMBL-CDS" id="CAB44348"/>
    </conflict>
</comment>
<accession>Q86YN1</accession>
<accession>A8K3U8</accession>
<accession>B0QZG4</accession>
<accession>Q96GF8</accession>
<accession>Q9Y3G1</accession>
<dbReference type="EC" id="3.6.1.43"/>
<dbReference type="EMBL" id="AY189675">
    <property type="protein sequence ID" value="AAO34712.1"/>
    <property type="molecule type" value="mRNA"/>
</dbReference>
<dbReference type="EMBL" id="AK290713">
    <property type="protein sequence ID" value="BAF83402.1"/>
    <property type="molecule type" value="mRNA"/>
</dbReference>
<dbReference type="EMBL" id="AK293627">
    <property type="protein sequence ID" value="BAG57084.1"/>
    <property type="molecule type" value="mRNA"/>
</dbReference>
<dbReference type="EMBL" id="AL592211">
    <property type="status" value="NOT_ANNOTATED_CDS"/>
    <property type="molecule type" value="Genomic_DNA"/>
</dbReference>
<dbReference type="EMBL" id="CH471090">
    <property type="protein sequence ID" value="EAW87868.1"/>
    <property type="molecule type" value="Genomic_DNA"/>
</dbReference>
<dbReference type="EMBL" id="CH471090">
    <property type="protein sequence ID" value="EAW87872.1"/>
    <property type="molecule type" value="Genomic_DNA"/>
</dbReference>
<dbReference type="EMBL" id="BC009493">
    <property type="protein sequence ID" value="AAH09493.2"/>
    <property type="molecule type" value="mRNA"/>
</dbReference>
<dbReference type="EMBL" id="BC033686">
    <property type="protein sequence ID" value="AAH33686.1"/>
    <property type="molecule type" value="mRNA"/>
</dbReference>
<dbReference type="EMBL" id="Y17455">
    <property type="protein sequence ID" value="CAB44348.1"/>
    <property type="status" value="ALT_SEQ"/>
    <property type="molecule type" value="Genomic_DNA"/>
</dbReference>
<dbReference type="CCDS" id="CCDS48039.1">
    <molecule id="Q86YN1-2"/>
</dbReference>
<dbReference type="CCDS" id="CCDS6918.1">
    <molecule id="Q86YN1-1"/>
</dbReference>
<dbReference type="RefSeq" id="NP_001129389.1">
    <molecule id="Q86YN1-2"/>
    <property type="nucleotide sequence ID" value="NM_001135917.2"/>
</dbReference>
<dbReference type="RefSeq" id="NP_065171.2">
    <molecule id="Q86YN1-1"/>
    <property type="nucleotide sequence ID" value="NM_020438.4"/>
</dbReference>
<dbReference type="SMR" id="Q86YN1"/>
<dbReference type="BioGRID" id="121423">
    <property type="interactions" value="54"/>
</dbReference>
<dbReference type="FunCoup" id="Q86YN1">
    <property type="interactions" value="1310"/>
</dbReference>
<dbReference type="IntAct" id="Q86YN1">
    <property type="interactions" value="14"/>
</dbReference>
<dbReference type="STRING" id="9606.ENSP00000361625"/>
<dbReference type="SwissPalm" id="Q86YN1"/>
<dbReference type="BioMuta" id="DOLPP1"/>
<dbReference type="DMDM" id="45476905"/>
<dbReference type="jPOST" id="Q86YN1"/>
<dbReference type="MassIVE" id="Q86YN1"/>
<dbReference type="PaxDb" id="9606-ENSP00000361625"/>
<dbReference type="PeptideAtlas" id="Q86YN1"/>
<dbReference type="ProteomicsDB" id="70438">
    <molecule id="Q86YN1-1"/>
</dbReference>
<dbReference type="ProteomicsDB" id="70439">
    <molecule id="Q86YN1-2"/>
</dbReference>
<dbReference type="Pumba" id="Q86YN1"/>
<dbReference type="Antibodypedia" id="17806">
    <property type="antibodies" value="78 antibodies from 15 providers"/>
</dbReference>
<dbReference type="DNASU" id="57171"/>
<dbReference type="Ensembl" id="ENST00000372546.9">
    <molecule id="Q86YN1-1"/>
    <property type="protein sequence ID" value="ENSP00000361625.4"/>
    <property type="gene ID" value="ENSG00000167130.18"/>
</dbReference>
<dbReference type="Ensembl" id="ENST00000406974.7">
    <molecule id="Q86YN1-2"/>
    <property type="protein sequence ID" value="ENSP00000384043.3"/>
    <property type="gene ID" value="ENSG00000167130.18"/>
</dbReference>
<dbReference type="GeneID" id="57171"/>
<dbReference type="KEGG" id="hsa:57171"/>
<dbReference type="MANE-Select" id="ENST00000372546.9">
    <property type="protein sequence ID" value="ENSP00000361625.4"/>
    <property type="RefSeq nucleotide sequence ID" value="NM_020438.5"/>
    <property type="RefSeq protein sequence ID" value="NP_065171.2"/>
</dbReference>
<dbReference type="UCSC" id="uc004bxc.4">
    <molecule id="Q86YN1-1"/>
    <property type="organism name" value="human"/>
</dbReference>
<dbReference type="AGR" id="HGNC:29565"/>
<dbReference type="CTD" id="57171"/>
<dbReference type="GeneCards" id="DOLPP1"/>
<dbReference type="HGNC" id="HGNC:29565">
    <property type="gene designation" value="DOLPP1"/>
</dbReference>
<dbReference type="HPA" id="ENSG00000167130">
    <property type="expression patterns" value="Low tissue specificity"/>
</dbReference>
<dbReference type="MIM" id="614516">
    <property type="type" value="gene"/>
</dbReference>
<dbReference type="neXtProt" id="NX_Q86YN1"/>
<dbReference type="OpenTargets" id="ENSG00000167130"/>
<dbReference type="PharmGKB" id="PA134937229"/>
<dbReference type="VEuPathDB" id="HostDB:ENSG00000167130"/>
<dbReference type="eggNOG" id="KOG3146">
    <property type="taxonomic scope" value="Eukaryota"/>
</dbReference>
<dbReference type="GeneTree" id="ENSGT00390000013112"/>
<dbReference type="HOGENOM" id="CLU_074922_1_2_1"/>
<dbReference type="InParanoid" id="Q86YN1"/>
<dbReference type="OMA" id="VYATLIW"/>
<dbReference type="OrthoDB" id="302705at2759"/>
<dbReference type="PAN-GO" id="Q86YN1">
    <property type="GO annotations" value="5 GO annotations based on evolutionary models"/>
</dbReference>
<dbReference type="PhylomeDB" id="Q86YN1"/>
<dbReference type="TreeFam" id="TF323451"/>
<dbReference type="PathwayCommons" id="Q86YN1"/>
<dbReference type="Reactome" id="R-HSA-446199">
    <property type="pathway name" value="Synthesis of Dolichyl-phosphate"/>
</dbReference>
<dbReference type="SignaLink" id="Q86YN1"/>
<dbReference type="UniPathway" id="UPA00378"/>
<dbReference type="BioGRID-ORCS" id="57171">
    <property type="hits" value="141 hits in 1178 CRISPR screens"/>
</dbReference>
<dbReference type="ChiTaRS" id="DOLPP1">
    <property type="organism name" value="human"/>
</dbReference>
<dbReference type="GenomeRNAi" id="57171"/>
<dbReference type="Pharos" id="Q86YN1">
    <property type="development level" value="Tdark"/>
</dbReference>
<dbReference type="PRO" id="PR:Q86YN1"/>
<dbReference type="Proteomes" id="UP000005640">
    <property type="component" value="Chromosome 9"/>
</dbReference>
<dbReference type="RNAct" id="Q86YN1">
    <property type="molecule type" value="protein"/>
</dbReference>
<dbReference type="Bgee" id="ENSG00000167130">
    <property type="expression patterns" value="Expressed in ileal mucosa and 177 other cell types or tissues"/>
</dbReference>
<dbReference type="ExpressionAtlas" id="Q86YN1">
    <property type="expression patterns" value="baseline and differential"/>
</dbReference>
<dbReference type="GO" id="GO:0005789">
    <property type="term" value="C:endoplasmic reticulum membrane"/>
    <property type="evidence" value="ECO:0000250"/>
    <property type="project" value="UniProtKB"/>
</dbReference>
<dbReference type="GO" id="GO:0047874">
    <property type="term" value="F:dolichyldiphosphatase activity"/>
    <property type="evidence" value="ECO:0000250"/>
    <property type="project" value="UniProtKB"/>
</dbReference>
<dbReference type="GO" id="GO:0006489">
    <property type="term" value="P:dolichyl diphosphate biosynthetic process"/>
    <property type="evidence" value="ECO:0000304"/>
    <property type="project" value="Reactome"/>
</dbReference>
<dbReference type="GO" id="GO:0006487">
    <property type="term" value="P:protein N-linked glycosylation"/>
    <property type="evidence" value="ECO:0000250"/>
    <property type="project" value="UniProtKB"/>
</dbReference>
<dbReference type="CDD" id="cd03382">
    <property type="entry name" value="PAP2_dolichyldiphosphatase"/>
    <property type="match status" value="1"/>
</dbReference>
<dbReference type="FunFam" id="1.20.144.10:FF:000003">
    <property type="entry name" value="Dolichyldiphosphatase 1"/>
    <property type="match status" value="1"/>
</dbReference>
<dbReference type="Gene3D" id="1.20.144.10">
    <property type="entry name" value="Phosphatidic acid phosphatase type 2/haloperoxidase"/>
    <property type="match status" value="1"/>
</dbReference>
<dbReference type="InterPro" id="IPR039667">
    <property type="entry name" value="Dolichyldiphosphatase_PAP2"/>
</dbReference>
<dbReference type="InterPro" id="IPR036938">
    <property type="entry name" value="P_Acid_Pase_2/haloperoxi_sf"/>
</dbReference>
<dbReference type="InterPro" id="IPR000326">
    <property type="entry name" value="P_Acid_Pase_2/haloperoxidase"/>
</dbReference>
<dbReference type="PANTHER" id="PTHR11247:SF1">
    <property type="entry name" value="DOLICHYLDIPHOSPHATASE 1"/>
    <property type="match status" value="1"/>
</dbReference>
<dbReference type="PANTHER" id="PTHR11247">
    <property type="entry name" value="PALMITOYL-PROTEIN THIOESTERASE/DOLICHYLDIPHOSPHATASE 1"/>
    <property type="match status" value="1"/>
</dbReference>
<dbReference type="Pfam" id="PF01569">
    <property type="entry name" value="PAP2"/>
    <property type="match status" value="1"/>
</dbReference>
<dbReference type="SMART" id="SM00014">
    <property type="entry name" value="acidPPc"/>
    <property type="match status" value="1"/>
</dbReference>
<dbReference type="SUPFAM" id="SSF48317">
    <property type="entry name" value="Acid phosphatase/Vanadium-dependent haloperoxidase"/>
    <property type="match status" value="1"/>
</dbReference>
<name>DOPP1_HUMAN</name>